<dbReference type="EC" id="2.1.3.15" evidence="1"/>
<dbReference type="EMBL" id="AE016827">
    <property type="protein sequence ID" value="AAU37781.1"/>
    <property type="status" value="ALT_INIT"/>
    <property type="molecule type" value="Genomic_DNA"/>
</dbReference>
<dbReference type="RefSeq" id="WP_011200348.1">
    <property type="nucleotide sequence ID" value="NC_006300.1"/>
</dbReference>
<dbReference type="SMR" id="Q65TC9"/>
<dbReference type="STRING" id="221988.MS1174"/>
<dbReference type="KEGG" id="msu:MS1174"/>
<dbReference type="eggNOG" id="COG0777">
    <property type="taxonomic scope" value="Bacteria"/>
</dbReference>
<dbReference type="HOGENOM" id="CLU_015486_1_0_6"/>
<dbReference type="OrthoDB" id="9772975at2"/>
<dbReference type="UniPathway" id="UPA00655">
    <property type="reaction ID" value="UER00711"/>
</dbReference>
<dbReference type="Proteomes" id="UP000000607">
    <property type="component" value="Chromosome"/>
</dbReference>
<dbReference type="GO" id="GO:0009329">
    <property type="term" value="C:acetate CoA-transferase complex"/>
    <property type="evidence" value="ECO:0007669"/>
    <property type="project" value="TreeGrafter"/>
</dbReference>
<dbReference type="GO" id="GO:0003989">
    <property type="term" value="F:acetyl-CoA carboxylase activity"/>
    <property type="evidence" value="ECO:0007669"/>
    <property type="project" value="InterPro"/>
</dbReference>
<dbReference type="GO" id="GO:0005524">
    <property type="term" value="F:ATP binding"/>
    <property type="evidence" value="ECO:0007669"/>
    <property type="project" value="UniProtKB-KW"/>
</dbReference>
<dbReference type="GO" id="GO:0016743">
    <property type="term" value="F:carboxyl- or carbamoyltransferase activity"/>
    <property type="evidence" value="ECO:0007669"/>
    <property type="project" value="UniProtKB-UniRule"/>
</dbReference>
<dbReference type="GO" id="GO:0008270">
    <property type="term" value="F:zinc ion binding"/>
    <property type="evidence" value="ECO:0007669"/>
    <property type="project" value="UniProtKB-UniRule"/>
</dbReference>
<dbReference type="GO" id="GO:0006633">
    <property type="term" value="P:fatty acid biosynthetic process"/>
    <property type="evidence" value="ECO:0007669"/>
    <property type="project" value="UniProtKB-KW"/>
</dbReference>
<dbReference type="GO" id="GO:2001295">
    <property type="term" value="P:malonyl-CoA biosynthetic process"/>
    <property type="evidence" value="ECO:0007669"/>
    <property type="project" value="UniProtKB-UniRule"/>
</dbReference>
<dbReference type="Gene3D" id="3.90.226.10">
    <property type="entry name" value="2-enoyl-CoA Hydratase, Chain A, domain 1"/>
    <property type="match status" value="1"/>
</dbReference>
<dbReference type="HAMAP" id="MF_01395">
    <property type="entry name" value="AcetylCoA_CT_beta"/>
    <property type="match status" value="1"/>
</dbReference>
<dbReference type="InterPro" id="IPR034733">
    <property type="entry name" value="AcCoA_carboxyl_beta"/>
</dbReference>
<dbReference type="InterPro" id="IPR000438">
    <property type="entry name" value="Acetyl_CoA_COase_Trfase_b_su"/>
</dbReference>
<dbReference type="InterPro" id="IPR029045">
    <property type="entry name" value="ClpP/crotonase-like_dom_sf"/>
</dbReference>
<dbReference type="InterPro" id="IPR011762">
    <property type="entry name" value="COA_CT_N"/>
</dbReference>
<dbReference type="InterPro" id="IPR041010">
    <property type="entry name" value="Znf-ACC"/>
</dbReference>
<dbReference type="NCBIfam" id="TIGR00515">
    <property type="entry name" value="accD"/>
    <property type="match status" value="1"/>
</dbReference>
<dbReference type="PANTHER" id="PTHR42995">
    <property type="entry name" value="ACETYL-COENZYME A CARBOXYLASE CARBOXYL TRANSFERASE SUBUNIT BETA, CHLOROPLASTIC"/>
    <property type="match status" value="1"/>
</dbReference>
<dbReference type="PANTHER" id="PTHR42995:SF5">
    <property type="entry name" value="ACETYL-COENZYME A CARBOXYLASE CARBOXYL TRANSFERASE SUBUNIT BETA, CHLOROPLASTIC"/>
    <property type="match status" value="1"/>
</dbReference>
<dbReference type="Pfam" id="PF01039">
    <property type="entry name" value="Carboxyl_trans"/>
    <property type="match status" value="1"/>
</dbReference>
<dbReference type="Pfam" id="PF17848">
    <property type="entry name" value="Zn_ribbon_ACC"/>
    <property type="match status" value="1"/>
</dbReference>
<dbReference type="PRINTS" id="PR01070">
    <property type="entry name" value="ACCCTRFRASEB"/>
</dbReference>
<dbReference type="SUPFAM" id="SSF52096">
    <property type="entry name" value="ClpP/crotonase"/>
    <property type="match status" value="1"/>
</dbReference>
<dbReference type="PROSITE" id="PS50980">
    <property type="entry name" value="COA_CT_NTER"/>
    <property type="match status" value="1"/>
</dbReference>
<organism>
    <name type="scientific">Mannheimia succiniciproducens (strain KCTC 0769BP / MBEL55E)</name>
    <dbReference type="NCBI Taxonomy" id="221988"/>
    <lineage>
        <taxon>Bacteria</taxon>
        <taxon>Pseudomonadati</taxon>
        <taxon>Pseudomonadota</taxon>
        <taxon>Gammaproteobacteria</taxon>
        <taxon>Pasteurellales</taxon>
        <taxon>Pasteurellaceae</taxon>
        <taxon>Basfia</taxon>
    </lineage>
</organism>
<feature type="chain" id="PRO_0000359006" description="Acetyl-coenzyme A carboxylase carboxyl transferase subunit beta">
    <location>
        <begin position="1"/>
        <end position="295"/>
    </location>
</feature>
<feature type="domain" description="CoA carboxyltransferase N-terminal" evidence="2">
    <location>
        <begin position="25"/>
        <end position="294"/>
    </location>
</feature>
<feature type="zinc finger region" description="C4-type" evidence="1">
    <location>
        <begin position="29"/>
        <end position="51"/>
    </location>
</feature>
<feature type="binding site" evidence="1">
    <location>
        <position position="29"/>
    </location>
    <ligand>
        <name>Zn(2+)</name>
        <dbReference type="ChEBI" id="CHEBI:29105"/>
    </ligand>
</feature>
<feature type="binding site" evidence="1">
    <location>
        <position position="32"/>
    </location>
    <ligand>
        <name>Zn(2+)</name>
        <dbReference type="ChEBI" id="CHEBI:29105"/>
    </ligand>
</feature>
<feature type="binding site" evidence="1">
    <location>
        <position position="48"/>
    </location>
    <ligand>
        <name>Zn(2+)</name>
        <dbReference type="ChEBI" id="CHEBI:29105"/>
    </ligand>
</feature>
<feature type="binding site" evidence="1">
    <location>
        <position position="51"/>
    </location>
    <ligand>
        <name>Zn(2+)</name>
        <dbReference type="ChEBI" id="CHEBI:29105"/>
    </ligand>
</feature>
<evidence type="ECO:0000255" key="1">
    <source>
        <dbReference type="HAMAP-Rule" id="MF_01395"/>
    </source>
</evidence>
<evidence type="ECO:0000255" key="2">
    <source>
        <dbReference type="PROSITE-ProRule" id="PRU01136"/>
    </source>
</evidence>
<evidence type="ECO:0000305" key="3"/>
<proteinExistence type="inferred from homology"/>
<comment type="function">
    <text evidence="1">Component of the acetyl coenzyme A carboxylase (ACC) complex. Biotin carboxylase (BC) catalyzes the carboxylation of biotin on its carrier protein (BCCP) and then the CO(2) group is transferred by the transcarboxylase to acetyl-CoA to form malonyl-CoA.</text>
</comment>
<comment type="catalytic activity">
    <reaction evidence="1">
        <text>N(6)-carboxybiotinyl-L-lysyl-[protein] + acetyl-CoA = N(6)-biotinyl-L-lysyl-[protein] + malonyl-CoA</text>
        <dbReference type="Rhea" id="RHEA:54728"/>
        <dbReference type="Rhea" id="RHEA-COMP:10505"/>
        <dbReference type="Rhea" id="RHEA-COMP:10506"/>
        <dbReference type="ChEBI" id="CHEBI:57288"/>
        <dbReference type="ChEBI" id="CHEBI:57384"/>
        <dbReference type="ChEBI" id="CHEBI:83144"/>
        <dbReference type="ChEBI" id="CHEBI:83145"/>
        <dbReference type="EC" id="2.1.3.15"/>
    </reaction>
</comment>
<comment type="cofactor">
    <cofactor evidence="1">
        <name>Zn(2+)</name>
        <dbReference type="ChEBI" id="CHEBI:29105"/>
    </cofactor>
    <text evidence="1">Binds 1 zinc ion per subunit.</text>
</comment>
<comment type="pathway">
    <text evidence="1">Lipid metabolism; malonyl-CoA biosynthesis; malonyl-CoA from acetyl-CoA: step 1/1.</text>
</comment>
<comment type="subunit">
    <text evidence="1">Acetyl-CoA carboxylase is a heterohexamer composed of biotin carboxyl carrier protein (AccB), biotin carboxylase (AccC) and two subunits each of ACCase subunit alpha (AccA) and ACCase subunit beta (AccD).</text>
</comment>
<comment type="subcellular location">
    <subcellularLocation>
        <location evidence="1">Cytoplasm</location>
    </subcellularLocation>
</comment>
<comment type="similarity">
    <text evidence="1">Belongs to the AccD/PCCB family.</text>
</comment>
<comment type="sequence caution" evidence="3">
    <conflict type="erroneous initiation">
        <sequence resource="EMBL-CDS" id="AAU37781"/>
    </conflict>
    <text>Extended N-terminus.</text>
</comment>
<reference key="1">
    <citation type="journal article" date="2004" name="Nat. Biotechnol.">
        <title>The genome sequence of the capnophilic rumen bacterium Mannheimia succiniciproducens.</title>
        <authorList>
            <person name="Hong S.H."/>
            <person name="Kim J.S."/>
            <person name="Lee S.Y."/>
            <person name="In Y.H."/>
            <person name="Choi S.S."/>
            <person name="Rih J.-K."/>
            <person name="Kim C.H."/>
            <person name="Jeong H."/>
            <person name="Hur C.G."/>
            <person name="Kim J.J."/>
        </authorList>
    </citation>
    <scope>NUCLEOTIDE SEQUENCE [LARGE SCALE GENOMIC DNA]</scope>
    <source>
        <strain>KCTC 0769BP / MBEL55E</strain>
    </source>
</reference>
<sequence length="295" mass="32211">MSWIDKIFSKSPISSSRKANVPEGVWTKCTSCEQVLYRDELKRHLEVCPKCGHHMRIDARERLLALLDKDGVTELAADLEPKDILKFRDLKKYKDRLTAAQKDTGEKDALVVLSGTLYGLPIVAAASNFGFMGGSMGSVVGAKFVAAAEEAMEKNCPFVCFSASGGARMQEALFSLMQMAKTSAVLAKMKEKGVPFISVLTDPTLGGVSASFAMLGDINIAEPKALIGFAGPRVIEQTVREKLPEGFQRAEFLLEHGAIDMIVKRSDMRDTLASLLTKLMNKPSPFNAEELSDTE</sequence>
<protein>
    <recommendedName>
        <fullName evidence="1">Acetyl-coenzyme A carboxylase carboxyl transferase subunit beta</fullName>
        <shortName evidence="1">ACCase subunit beta</shortName>
        <shortName evidence="1">Acetyl-CoA carboxylase carboxyltransferase subunit beta</shortName>
        <ecNumber evidence="1">2.1.3.15</ecNumber>
    </recommendedName>
</protein>
<keyword id="KW-0067">ATP-binding</keyword>
<keyword id="KW-0963">Cytoplasm</keyword>
<keyword id="KW-0275">Fatty acid biosynthesis</keyword>
<keyword id="KW-0276">Fatty acid metabolism</keyword>
<keyword id="KW-0444">Lipid biosynthesis</keyword>
<keyword id="KW-0443">Lipid metabolism</keyword>
<keyword id="KW-0479">Metal-binding</keyword>
<keyword id="KW-0547">Nucleotide-binding</keyword>
<keyword id="KW-0808">Transferase</keyword>
<keyword id="KW-0862">Zinc</keyword>
<keyword id="KW-0863">Zinc-finger</keyword>
<accession>Q65TC9</accession>
<gene>
    <name evidence="1" type="primary">accD</name>
    <name type="ordered locus">MS1174</name>
</gene>
<name>ACCD_MANSM</name>